<feature type="chain" id="PRO_1000057950" description="Phosphoglycerate kinase">
    <location>
        <begin position="1"/>
        <end position="395"/>
    </location>
</feature>
<feature type="binding site" evidence="1">
    <location>
        <begin position="21"/>
        <end position="23"/>
    </location>
    <ligand>
        <name>substrate</name>
    </ligand>
</feature>
<feature type="binding site" evidence="1">
    <location>
        <position position="36"/>
    </location>
    <ligand>
        <name>substrate</name>
    </ligand>
</feature>
<feature type="binding site" evidence="1">
    <location>
        <begin position="59"/>
        <end position="62"/>
    </location>
    <ligand>
        <name>substrate</name>
    </ligand>
</feature>
<feature type="binding site" evidence="1">
    <location>
        <position position="113"/>
    </location>
    <ligand>
        <name>substrate</name>
    </ligand>
</feature>
<feature type="binding site" evidence="1">
    <location>
        <position position="146"/>
    </location>
    <ligand>
        <name>substrate</name>
    </ligand>
</feature>
<feature type="binding site" evidence="1">
    <location>
        <position position="197"/>
    </location>
    <ligand>
        <name>ATP</name>
        <dbReference type="ChEBI" id="CHEBI:30616"/>
    </ligand>
</feature>
<feature type="binding site" evidence="1">
    <location>
        <position position="324"/>
    </location>
    <ligand>
        <name>ATP</name>
        <dbReference type="ChEBI" id="CHEBI:30616"/>
    </ligand>
</feature>
<feature type="binding site" evidence="1">
    <location>
        <begin position="350"/>
        <end position="353"/>
    </location>
    <ligand>
        <name>ATP</name>
        <dbReference type="ChEBI" id="CHEBI:30616"/>
    </ligand>
</feature>
<organism>
    <name type="scientific">Acinetobacter baylyi (strain ATCC 33305 / BD413 / ADP1)</name>
    <dbReference type="NCBI Taxonomy" id="62977"/>
    <lineage>
        <taxon>Bacteria</taxon>
        <taxon>Pseudomonadati</taxon>
        <taxon>Pseudomonadota</taxon>
        <taxon>Gammaproteobacteria</taxon>
        <taxon>Moraxellales</taxon>
        <taxon>Moraxellaceae</taxon>
        <taxon>Acinetobacter</taxon>
    </lineage>
</organism>
<gene>
    <name evidence="1" type="primary">pgk</name>
    <name type="ordered locus">ACIAD1927</name>
</gene>
<sequence>MNFKRMTDLDLSEKRVLIREDLNVPVKNGQITSDARLRAALPTIQAALAQGAAVMVCSHLGRPVEGEPKPEQSLAPVAAYLSDALGQEVKLLTDYLEGVEIAPGQVVLLENVRFNLGEKKNNAELAQKYAALCDVFVMDAFGTAHRAEASTEGAARYAKVAAAGPLLATELDALGRALQTPEKPMVAIVAGSKVSTKLDVLTSLSDICGQLIVGGGIANTFLAAAGFNVGKSLCENDLIDTAKAIAAKVSVPLPTDVVVADATEIDFADFLGSLAKAQAIVKKVEDIADNDMILDVGPDTAKAFAEILKTAKTILWNGPVGVFEVDQFGEGTKTLSLAIAESKGFSIAGGGDTLAAIDKYKVADKIGYISTGGGAFLEFVEGKTLPAVAVLLERA</sequence>
<comment type="catalytic activity">
    <reaction evidence="1">
        <text>(2R)-3-phosphoglycerate + ATP = (2R)-3-phospho-glyceroyl phosphate + ADP</text>
        <dbReference type="Rhea" id="RHEA:14801"/>
        <dbReference type="ChEBI" id="CHEBI:30616"/>
        <dbReference type="ChEBI" id="CHEBI:57604"/>
        <dbReference type="ChEBI" id="CHEBI:58272"/>
        <dbReference type="ChEBI" id="CHEBI:456216"/>
        <dbReference type="EC" id="2.7.2.3"/>
    </reaction>
</comment>
<comment type="pathway">
    <text evidence="1">Carbohydrate degradation; glycolysis; pyruvate from D-glyceraldehyde 3-phosphate: step 2/5.</text>
</comment>
<comment type="subunit">
    <text evidence="1">Monomer.</text>
</comment>
<comment type="subcellular location">
    <subcellularLocation>
        <location evidence="1">Cytoplasm</location>
    </subcellularLocation>
</comment>
<comment type="similarity">
    <text evidence="1">Belongs to the phosphoglycerate kinase family.</text>
</comment>
<evidence type="ECO:0000255" key="1">
    <source>
        <dbReference type="HAMAP-Rule" id="MF_00145"/>
    </source>
</evidence>
<protein>
    <recommendedName>
        <fullName evidence="1">Phosphoglycerate kinase</fullName>
        <ecNumber evidence="1">2.7.2.3</ecNumber>
    </recommendedName>
</protein>
<dbReference type="EC" id="2.7.2.3" evidence="1"/>
<dbReference type="EMBL" id="CR543861">
    <property type="protein sequence ID" value="CAG68755.1"/>
    <property type="molecule type" value="Genomic_DNA"/>
</dbReference>
<dbReference type="RefSeq" id="WP_004927172.1">
    <property type="nucleotide sequence ID" value="NC_005966.1"/>
</dbReference>
<dbReference type="SMR" id="Q6FB08"/>
<dbReference type="STRING" id="202950.GCA_001485005_00437"/>
<dbReference type="GeneID" id="45234294"/>
<dbReference type="KEGG" id="aci:ACIAD1927"/>
<dbReference type="eggNOG" id="COG0126">
    <property type="taxonomic scope" value="Bacteria"/>
</dbReference>
<dbReference type="HOGENOM" id="CLU_025427_0_2_6"/>
<dbReference type="OrthoDB" id="9808460at2"/>
<dbReference type="BioCyc" id="ASP62977:ACIAD_RS08875-MONOMER"/>
<dbReference type="UniPathway" id="UPA00109">
    <property type="reaction ID" value="UER00185"/>
</dbReference>
<dbReference type="Proteomes" id="UP000000430">
    <property type="component" value="Chromosome"/>
</dbReference>
<dbReference type="GO" id="GO:0005829">
    <property type="term" value="C:cytosol"/>
    <property type="evidence" value="ECO:0007669"/>
    <property type="project" value="TreeGrafter"/>
</dbReference>
<dbReference type="GO" id="GO:0043531">
    <property type="term" value="F:ADP binding"/>
    <property type="evidence" value="ECO:0007669"/>
    <property type="project" value="TreeGrafter"/>
</dbReference>
<dbReference type="GO" id="GO:0005524">
    <property type="term" value="F:ATP binding"/>
    <property type="evidence" value="ECO:0007669"/>
    <property type="project" value="UniProtKB-KW"/>
</dbReference>
<dbReference type="GO" id="GO:0004618">
    <property type="term" value="F:phosphoglycerate kinase activity"/>
    <property type="evidence" value="ECO:0007669"/>
    <property type="project" value="UniProtKB-UniRule"/>
</dbReference>
<dbReference type="GO" id="GO:0006094">
    <property type="term" value="P:gluconeogenesis"/>
    <property type="evidence" value="ECO:0007669"/>
    <property type="project" value="TreeGrafter"/>
</dbReference>
<dbReference type="GO" id="GO:0006096">
    <property type="term" value="P:glycolytic process"/>
    <property type="evidence" value="ECO:0007669"/>
    <property type="project" value="UniProtKB-UniRule"/>
</dbReference>
<dbReference type="FunFam" id="3.40.50.1260:FF:000001">
    <property type="entry name" value="Phosphoglycerate kinase"/>
    <property type="match status" value="1"/>
</dbReference>
<dbReference type="FunFam" id="3.40.50.1260:FF:000002">
    <property type="entry name" value="Phosphoglycerate kinase"/>
    <property type="match status" value="1"/>
</dbReference>
<dbReference type="Gene3D" id="3.40.50.1260">
    <property type="entry name" value="Phosphoglycerate kinase, N-terminal domain"/>
    <property type="match status" value="2"/>
</dbReference>
<dbReference type="HAMAP" id="MF_00145">
    <property type="entry name" value="Phosphoglyc_kinase"/>
    <property type="match status" value="1"/>
</dbReference>
<dbReference type="InterPro" id="IPR001576">
    <property type="entry name" value="Phosphoglycerate_kinase"/>
</dbReference>
<dbReference type="InterPro" id="IPR015911">
    <property type="entry name" value="Phosphoglycerate_kinase_CS"/>
</dbReference>
<dbReference type="InterPro" id="IPR015824">
    <property type="entry name" value="Phosphoglycerate_kinase_N"/>
</dbReference>
<dbReference type="InterPro" id="IPR036043">
    <property type="entry name" value="Phosphoglycerate_kinase_sf"/>
</dbReference>
<dbReference type="PANTHER" id="PTHR11406">
    <property type="entry name" value="PHOSPHOGLYCERATE KINASE"/>
    <property type="match status" value="1"/>
</dbReference>
<dbReference type="PANTHER" id="PTHR11406:SF23">
    <property type="entry name" value="PHOSPHOGLYCERATE KINASE 1, CHLOROPLASTIC-RELATED"/>
    <property type="match status" value="1"/>
</dbReference>
<dbReference type="Pfam" id="PF00162">
    <property type="entry name" value="PGK"/>
    <property type="match status" value="1"/>
</dbReference>
<dbReference type="PIRSF" id="PIRSF000724">
    <property type="entry name" value="Pgk"/>
    <property type="match status" value="1"/>
</dbReference>
<dbReference type="PRINTS" id="PR00477">
    <property type="entry name" value="PHGLYCKINASE"/>
</dbReference>
<dbReference type="SUPFAM" id="SSF53748">
    <property type="entry name" value="Phosphoglycerate kinase"/>
    <property type="match status" value="1"/>
</dbReference>
<dbReference type="PROSITE" id="PS00111">
    <property type="entry name" value="PGLYCERATE_KINASE"/>
    <property type="match status" value="1"/>
</dbReference>
<proteinExistence type="inferred from homology"/>
<name>PGK_ACIAD</name>
<accession>Q6FB08</accession>
<keyword id="KW-0067">ATP-binding</keyword>
<keyword id="KW-0963">Cytoplasm</keyword>
<keyword id="KW-0324">Glycolysis</keyword>
<keyword id="KW-0418">Kinase</keyword>
<keyword id="KW-0547">Nucleotide-binding</keyword>
<keyword id="KW-0808">Transferase</keyword>
<reference key="1">
    <citation type="journal article" date="2004" name="Nucleic Acids Res.">
        <title>Unique features revealed by the genome sequence of Acinetobacter sp. ADP1, a versatile and naturally transformation competent bacterium.</title>
        <authorList>
            <person name="Barbe V."/>
            <person name="Vallenet D."/>
            <person name="Fonknechten N."/>
            <person name="Kreimeyer A."/>
            <person name="Oztas S."/>
            <person name="Labarre L."/>
            <person name="Cruveiller S."/>
            <person name="Robert C."/>
            <person name="Duprat S."/>
            <person name="Wincker P."/>
            <person name="Ornston L.N."/>
            <person name="Weissenbach J."/>
            <person name="Marliere P."/>
            <person name="Cohen G.N."/>
            <person name="Medigue C."/>
        </authorList>
    </citation>
    <scope>NUCLEOTIDE SEQUENCE [LARGE SCALE GENOMIC DNA]</scope>
    <source>
        <strain>ATCC 33305 / BD413 / ADP1</strain>
    </source>
</reference>